<dbReference type="EMBL" id="BC109591">
    <property type="protein sequence ID" value="AAI09592.1"/>
    <property type="molecule type" value="mRNA"/>
</dbReference>
<dbReference type="RefSeq" id="NP_001033612.1">
    <property type="nucleotide sequence ID" value="NM_001038523.2"/>
</dbReference>
<dbReference type="SMR" id="Q2TBV6"/>
<dbReference type="FunCoup" id="Q2TBV6">
    <property type="interactions" value="1318"/>
</dbReference>
<dbReference type="STRING" id="9913.ENSBTAP00000069472"/>
<dbReference type="PaxDb" id="9913-ENSBTAP00000006040"/>
<dbReference type="Ensembl" id="ENSBTAT00000006040.5">
    <property type="protein sequence ID" value="ENSBTAP00000006040.3"/>
    <property type="gene ID" value="ENSBTAG00000004604.5"/>
</dbReference>
<dbReference type="GeneID" id="510778"/>
<dbReference type="KEGG" id="bta:510778"/>
<dbReference type="CTD" id="115098"/>
<dbReference type="VEuPathDB" id="HostDB:ENSBTAG00000004604"/>
<dbReference type="VGNC" id="VGNC:26840">
    <property type="gene designation" value="CCDC124"/>
</dbReference>
<dbReference type="eggNOG" id="KOG3223">
    <property type="taxonomic scope" value="Eukaryota"/>
</dbReference>
<dbReference type="GeneTree" id="ENSGT00390000012482"/>
<dbReference type="HOGENOM" id="CLU_069723_0_1_1"/>
<dbReference type="InParanoid" id="Q2TBV6"/>
<dbReference type="OMA" id="FEERMMP"/>
<dbReference type="OrthoDB" id="76412at2759"/>
<dbReference type="TreeFam" id="TF105913"/>
<dbReference type="Proteomes" id="UP000009136">
    <property type="component" value="Chromosome 7"/>
</dbReference>
<dbReference type="Bgee" id="ENSBTAG00000004604">
    <property type="expression patterns" value="Expressed in laryngeal cartilage and 109 other cell types or tissues"/>
</dbReference>
<dbReference type="GO" id="GO:0005813">
    <property type="term" value="C:centrosome"/>
    <property type="evidence" value="ECO:0007669"/>
    <property type="project" value="UniProtKB-SubCell"/>
</dbReference>
<dbReference type="GO" id="GO:0005737">
    <property type="term" value="C:cytoplasm"/>
    <property type="evidence" value="ECO:0007669"/>
    <property type="project" value="UniProtKB-KW"/>
</dbReference>
<dbReference type="GO" id="GO:0030496">
    <property type="term" value="C:midbody"/>
    <property type="evidence" value="ECO:0007669"/>
    <property type="project" value="UniProtKB-SubCell"/>
</dbReference>
<dbReference type="GO" id="GO:0005634">
    <property type="term" value="C:nucleus"/>
    <property type="evidence" value="ECO:0000318"/>
    <property type="project" value="GO_Central"/>
</dbReference>
<dbReference type="GO" id="GO:0003713">
    <property type="term" value="F:transcription coactivator activity"/>
    <property type="evidence" value="ECO:0000318"/>
    <property type="project" value="GO_Central"/>
</dbReference>
<dbReference type="GO" id="GO:0051301">
    <property type="term" value="P:cell division"/>
    <property type="evidence" value="ECO:0007669"/>
    <property type="project" value="UniProtKB-KW"/>
</dbReference>
<dbReference type="GO" id="GO:0006366">
    <property type="term" value="P:transcription by RNA polymerase II"/>
    <property type="evidence" value="ECO:0000318"/>
    <property type="project" value="GO_Central"/>
</dbReference>
<dbReference type="InterPro" id="IPR010422">
    <property type="entry name" value="Ccdc124/Oxs1"/>
</dbReference>
<dbReference type="InterPro" id="IPR054414">
    <property type="entry name" value="Ccdc124/Oxs1_C"/>
</dbReference>
<dbReference type="InterPro" id="IPR036910">
    <property type="entry name" value="HMG_box_dom_sf"/>
</dbReference>
<dbReference type="PANTHER" id="PTHR21680">
    <property type="entry name" value="COILED-COIL DOMAIN-CONTAINING PROTEIN 124"/>
    <property type="match status" value="1"/>
</dbReference>
<dbReference type="PANTHER" id="PTHR21680:SF0">
    <property type="entry name" value="COILED-COIL DOMAIN-CONTAINING PROTEIN 124"/>
    <property type="match status" value="1"/>
</dbReference>
<dbReference type="Pfam" id="PF06244">
    <property type="entry name" value="Ccdc124"/>
    <property type="match status" value="1"/>
</dbReference>
<dbReference type="SUPFAM" id="SSF47095">
    <property type="entry name" value="HMG-box"/>
    <property type="match status" value="1"/>
</dbReference>
<organism>
    <name type="scientific">Bos taurus</name>
    <name type="common">Bovine</name>
    <dbReference type="NCBI Taxonomy" id="9913"/>
    <lineage>
        <taxon>Eukaryota</taxon>
        <taxon>Metazoa</taxon>
        <taxon>Chordata</taxon>
        <taxon>Craniata</taxon>
        <taxon>Vertebrata</taxon>
        <taxon>Euteleostomi</taxon>
        <taxon>Mammalia</taxon>
        <taxon>Eutheria</taxon>
        <taxon>Laurasiatheria</taxon>
        <taxon>Artiodactyla</taxon>
        <taxon>Ruminantia</taxon>
        <taxon>Pecora</taxon>
        <taxon>Bovidae</taxon>
        <taxon>Bovinae</taxon>
        <taxon>Bos</taxon>
    </lineage>
</organism>
<comment type="function">
    <text evidence="1">Ribosome-binding protein involved in ribosome hibernation: associates with translationally inactive ribosomes and stabilizes the nonrotated conformation of the 80S ribosome, thereby promoting ribosome preservation and storage. Also required for proper progression of late cytokinetic stages.</text>
</comment>
<comment type="subunit">
    <text evidence="1">Associates with translationally inactive ribosomes in the nonrotated state. Interacts with RASGEF1B.</text>
</comment>
<comment type="subcellular location">
    <subcellularLocation>
        <location evidence="1">Cytoplasm</location>
        <location evidence="1">Cytoskeleton</location>
        <location evidence="1">Microtubule organizing center</location>
        <location evidence="1">Centrosome</location>
    </subcellularLocation>
    <subcellularLocation>
        <location evidence="1">Midbody</location>
    </subcellularLocation>
    <text evidence="1">Colocalizes with gamma-tubulin at interphase, prophase, metaphase, and anaphase. Relocates from centrosome to midbody at telophase.</text>
</comment>
<comment type="similarity">
    <text evidence="4">Belongs to the CCDC124 family.</text>
</comment>
<evidence type="ECO:0000250" key="1">
    <source>
        <dbReference type="UniProtKB" id="Q96CT7"/>
    </source>
</evidence>
<evidence type="ECO:0000255" key="2"/>
<evidence type="ECO:0000256" key="3">
    <source>
        <dbReference type="SAM" id="MobiDB-lite"/>
    </source>
</evidence>
<evidence type="ECO:0000305" key="4"/>
<sequence>MPKKFQGENTKSAAARARRAEAKAAADAKKQKELEDAYWRDEDKHVMRKEQRKEEKEKRRLEQLERKKETQRLLEEEDSKLKGGKAPRVAASSKVTRAQIEETLRRDHQHKESPDPAEKAKSHLEVPLEENVNRRVLEEGSVEARTIEDAIAVLSVTEEAVDRHPERRMRAAYTAFEEAQLPRLKQENPNMRLSQLKQMLKKEWLRSPDNPMNQRAVPFNTPK</sequence>
<gene>
    <name type="primary">CCDC124</name>
</gene>
<name>CC124_BOVIN</name>
<feature type="chain" id="PRO_0000263734" description="Coiled-coil domain-containing protein 124">
    <location>
        <begin position="1"/>
        <end position="223"/>
    </location>
</feature>
<feature type="region of interest" description="Disordered" evidence="3">
    <location>
        <begin position="1"/>
        <end position="126"/>
    </location>
</feature>
<feature type="coiled-coil region" evidence="2">
    <location>
        <begin position="15"/>
        <end position="82"/>
    </location>
</feature>
<feature type="compositionally biased region" description="Basic and acidic residues" evidence="3">
    <location>
        <begin position="18"/>
        <end position="74"/>
    </location>
</feature>
<feature type="compositionally biased region" description="Basic and acidic residues" evidence="3">
    <location>
        <begin position="99"/>
        <end position="126"/>
    </location>
</feature>
<feature type="modified residue" description="Phosphoserine" evidence="1">
    <location>
        <position position="141"/>
    </location>
</feature>
<feature type="modified residue" description="Phosphoserine" evidence="1">
    <location>
        <position position="194"/>
    </location>
</feature>
<accession>Q2TBV6</accession>
<proteinExistence type="evidence at transcript level"/>
<reference key="1">
    <citation type="submission" date="2005-11" db="EMBL/GenBank/DDBJ databases">
        <authorList>
            <consortium name="NIH - Mammalian Gene Collection (MGC) project"/>
        </authorList>
    </citation>
    <scope>NUCLEOTIDE SEQUENCE [LARGE SCALE MRNA]</scope>
    <source>
        <strain>Crossbred X Angus</strain>
        <tissue>Liver</tissue>
    </source>
</reference>
<protein>
    <recommendedName>
        <fullName>Coiled-coil domain-containing protein 124</fullName>
    </recommendedName>
</protein>
<keyword id="KW-0131">Cell cycle</keyword>
<keyword id="KW-0132">Cell division</keyword>
<keyword id="KW-0175">Coiled coil</keyword>
<keyword id="KW-0963">Cytoplasm</keyword>
<keyword id="KW-0206">Cytoskeleton</keyword>
<keyword id="KW-0597">Phosphoprotein</keyword>
<keyword id="KW-1185">Reference proteome</keyword>